<evidence type="ECO:0000255" key="1">
    <source>
        <dbReference type="HAMAP-Rule" id="MF_00111"/>
    </source>
</evidence>
<sequence>MICGSKTKSYLKSQNLKILGQGKLNGIVEISGAKNSALVLLASSLLTNEKIILENVPFLTDIEKMGNILKNLGVNLVRKNNQLEIDPTTISIKELPYELVKGLRASFFCIGALLTKFGEAQVPLPGGCNIGSRPIEEHINGLIALGAEIIIEKGIVKAKIRGNKNRLHGTHIKLNCPSVGATETLIMAASLAKGRTTIENAAREPEVQDLCQMLNKMGAKIYDSGKETIIIDGVNKLGGCTHKVIPDRIEAGTFLIAAAATSSSITISPVIPHHLEAVTNKLQESGSKITIKGNSISIKSKEIKGVDIETAPFPGFPTDLQAPFTTLMTIANGESKITETIFENRMNHIYLLNEMGASIKLNKNVAHIKGVKTINGMNLVGSDLRSSAALIIAGIIAKGSSNFYGLEHLDRGYENFELKLKNLGVKIIREISKNTFEENGYKIESKSENLSKLGAA</sequence>
<gene>
    <name evidence="1" type="primary">murA</name>
    <name type="ordered locus">A9601_14991</name>
</gene>
<organism>
    <name type="scientific">Prochlorococcus marinus (strain AS9601)</name>
    <dbReference type="NCBI Taxonomy" id="146891"/>
    <lineage>
        <taxon>Bacteria</taxon>
        <taxon>Bacillati</taxon>
        <taxon>Cyanobacteriota</taxon>
        <taxon>Cyanophyceae</taxon>
        <taxon>Synechococcales</taxon>
        <taxon>Prochlorococcaceae</taxon>
        <taxon>Prochlorococcus</taxon>
    </lineage>
</organism>
<accession>A2BSM1</accession>
<reference key="1">
    <citation type="journal article" date="2007" name="PLoS Genet.">
        <title>Patterns and implications of gene gain and loss in the evolution of Prochlorococcus.</title>
        <authorList>
            <person name="Kettler G.C."/>
            <person name="Martiny A.C."/>
            <person name="Huang K."/>
            <person name="Zucker J."/>
            <person name="Coleman M.L."/>
            <person name="Rodrigue S."/>
            <person name="Chen F."/>
            <person name="Lapidus A."/>
            <person name="Ferriera S."/>
            <person name="Johnson J."/>
            <person name="Steglich C."/>
            <person name="Church G.M."/>
            <person name="Richardson P."/>
            <person name="Chisholm S.W."/>
        </authorList>
    </citation>
    <scope>NUCLEOTIDE SEQUENCE [LARGE SCALE GENOMIC DNA]</scope>
    <source>
        <strain>AS9601</strain>
    </source>
</reference>
<protein>
    <recommendedName>
        <fullName evidence="1">UDP-N-acetylglucosamine 1-carboxyvinyltransferase</fullName>
        <ecNumber evidence="1">2.5.1.7</ecNumber>
    </recommendedName>
    <alternativeName>
        <fullName evidence="1">Enoylpyruvate transferase</fullName>
    </alternativeName>
    <alternativeName>
        <fullName evidence="1">UDP-N-acetylglucosamine enolpyruvyl transferase</fullName>
        <shortName evidence="1">EPT</shortName>
    </alternativeName>
</protein>
<comment type="function">
    <text evidence="1">Cell wall formation. Adds enolpyruvyl to UDP-N-acetylglucosamine.</text>
</comment>
<comment type="catalytic activity">
    <reaction evidence="1">
        <text>phosphoenolpyruvate + UDP-N-acetyl-alpha-D-glucosamine = UDP-N-acetyl-3-O-(1-carboxyvinyl)-alpha-D-glucosamine + phosphate</text>
        <dbReference type="Rhea" id="RHEA:18681"/>
        <dbReference type="ChEBI" id="CHEBI:43474"/>
        <dbReference type="ChEBI" id="CHEBI:57705"/>
        <dbReference type="ChEBI" id="CHEBI:58702"/>
        <dbReference type="ChEBI" id="CHEBI:68483"/>
        <dbReference type="EC" id="2.5.1.7"/>
    </reaction>
</comment>
<comment type="pathway">
    <text evidence="1">Cell wall biogenesis; peptidoglycan biosynthesis.</text>
</comment>
<comment type="subcellular location">
    <subcellularLocation>
        <location evidence="1">Cytoplasm</location>
    </subcellularLocation>
</comment>
<comment type="similarity">
    <text evidence="1">Belongs to the EPSP synthase family. MurA subfamily.</text>
</comment>
<proteinExistence type="inferred from homology"/>
<name>MURA_PROMS</name>
<feature type="chain" id="PRO_1000023069" description="UDP-N-acetylglucosamine 1-carboxyvinyltransferase">
    <location>
        <begin position="1"/>
        <end position="456"/>
    </location>
</feature>
<feature type="active site" description="Proton donor" evidence="1">
    <location>
        <position position="128"/>
    </location>
</feature>
<feature type="binding site" evidence="1">
    <location>
        <begin position="34"/>
        <end position="35"/>
    </location>
    <ligand>
        <name>phosphoenolpyruvate</name>
        <dbReference type="ChEBI" id="CHEBI:58702"/>
    </ligand>
</feature>
<feature type="binding site" evidence="1">
    <location>
        <position position="104"/>
    </location>
    <ligand>
        <name>UDP-N-acetyl-alpha-D-glucosamine</name>
        <dbReference type="ChEBI" id="CHEBI:57705"/>
    </ligand>
</feature>
<feature type="binding site" evidence="1">
    <location>
        <position position="319"/>
    </location>
    <ligand>
        <name>UDP-N-acetyl-alpha-D-glucosamine</name>
        <dbReference type="ChEBI" id="CHEBI:57705"/>
    </ligand>
</feature>
<feature type="binding site" evidence="1">
    <location>
        <position position="341"/>
    </location>
    <ligand>
        <name>UDP-N-acetyl-alpha-D-glucosamine</name>
        <dbReference type="ChEBI" id="CHEBI:57705"/>
    </ligand>
</feature>
<feature type="modified residue" description="2-(S-cysteinyl)pyruvic acid O-phosphothioketal" evidence="1">
    <location>
        <position position="128"/>
    </location>
</feature>
<keyword id="KW-0131">Cell cycle</keyword>
<keyword id="KW-0132">Cell division</keyword>
<keyword id="KW-0133">Cell shape</keyword>
<keyword id="KW-0961">Cell wall biogenesis/degradation</keyword>
<keyword id="KW-0963">Cytoplasm</keyword>
<keyword id="KW-0573">Peptidoglycan synthesis</keyword>
<keyword id="KW-0670">Pyruvate</keyword>
<keyword id="KW-0808">Transferase</keyword>
<dbReference type="EC" id="2.5.1.7" evidence="1"/>
<dbReference type="EMBL" id="CP000551">
    <property type="protein sequence ID" value="ABM70782.1"/>
    <property type="molecule type" value="Genomic_DNA"/>
</dbReference>
<dbReference type="RefSeq" id="WP_011818918.1">
    <property type="nucleotide sequence ID" value="NC_008816.1"/>
</dbReference>
<dbReference type="SMR" id="A2BSM1"/>
<dbReference type="STRING" id="146891.A9601_14991"/>
<dbReference type="KEGG" id="pmb:A9601_14991"/>
<dbReference type="eggNOG" id="COG0766">
    <property type="taxonomic scope" value="Bacteria"/>
</dbReference>
<dbReference type="HOGENOM" id="CLU_027387_0_0_3"/>
<dbReference type="OrthoDB" id="9803760at2"/>
<dbReference type="UniPathway" id="UPA00219"/>
<dbReference type="Proteomes" id="UP000002590">
    <property type="component" value="Chromosome"/>
</dbReference>
<dbReference type="GO" id="GO:0005737">
    <property type="term" value="C:cytoplasm"/>
    <property type="evidence" value="ECO:0007669"/>
    <property type="project" value="UniProtKB-SubCell"/>
</dbReference>
<dbReference type="GO" id="GO:0008760">
    <property type="term" value="F:UDP-N-acetylglucosamine 1-carboxyvinyltransferase activity"/>
    <property type="evidence" value="ECO:0007669"/>
    <property type="project" value="UniProtKB-UniRule"/>
</dbReference>
<dbReference type="GO" id="GO:0051301">
    <property type="term" value="P:cell division"/>
    <property type="evidence" value="ECO:0007669"/>
    <property type="project" value="UniProtKB-KW"/>
</dbReference>
<dbReference type="GO" id="GO:0071555">
    <property type="term" value="P:cell wall organization"/>
    <property type="evidence" value="ECO:0007669"/>
    <property type="project" value="UniProtKB-KW"/>
</dbReference>
<dbReference type="GO" id="GO:0009252">
    <property type="term" value="P:peptidoglycan biosynthetic process"/>
    <property type="evidence" value="ECO:0007669"/>
    <property type="project" value="UniProtKB-UniRule"/>
</dbReference>
<dbReference type="GO" id="GO:0008360">
    <property type="term" value="P:regulation of cell shape"/>
    <property type="evidence" value="ECO:0007669"/>
    <property type="project" value="UniProtKB-KW"/>
</dbReference>
<dbReference type="GO" id="GO:0019277">
    <property type="term" value="P:UDP-N-acetylgalactosamine biosynthetic process"/>
    <property type="evidence" value="ECO:0007669"/>
    <property type="project" value="InterPro"/>
</dbReference>
<dbReference type="CDD" id="cd01555">
    <property type="entry name" value="UdpNAET"/>
    <property type="match status" value="1"/>
</dbReference>
<dbReference type="FunFam" id="3.65.10.10:FF:000001">
    <property type="entry name" value="UDP-N-acetylglucosamine 1-carboxyvinyltransferase"/>
    <property type="match status" value="1"/>
</dbReference>
<dbReference type="Gene3D" id="3.65.10.10">
    <property type="entry name" value="Enolpyruvate transferase domain"/>
    <property type="match status" value="2"/>
</dbReference>
<dbReference type="HAMAP" id="MF_00111">
    <property type="entry name" value="MurA"/>
    <property type="match status" value="1"/>
</dbReference>
<dbReference type="InterPro" id="IPR001986">
    <property type="entry name" value="Enolpyruvate_Tfrase_dom"/>
</dbReference>
<dbReference type="InterPro" id="IPR036968">
    <property type="entry name" value="Enolpyruvate_Tfrase_sf"/>
</dbReference>
<dbReference type="InterPro" id="IPR050068">
    <property type="entry name" value="MurA_subfamily"/>
</dbReference>
<dbReference type="InterPro" id="IPR013792">
    <property type="entry name" value="RNA3'P_cycl/enolpyr_Trfase_a/b"/>
</dbReference>
<dbReference type="InterPro" id="IPR005750">
    <property type="entry name" value="UDP_GlcNAc_COvinyl_MurA"/>
</dbReference>
<dbReference type="NCBIfam" id="TIGR01072">
    <property type="entry name" value="murA"/>
    <property type="match status" value="1"/>
</dbReference>
<dbReference type="NCBIfam" id="NF006873">
    <property type="entry name" value="PRK09369.1"/>
    <property type="match status" value="1"/>
</dbReference>
<dbReference type="PANTHER" id="PTHR43783">
    <property type="entry name" value="UDP-N-ACETYLGLUCOSAMINE 1-CARBOXYVINYLTRANSFERASE"/>
    <property type="match status" value="1"/>
</dbReference>
<dbReference type="PANTHER" id="PTHR43783:SF1">
    <property type="entry name" value="UDP-N-ACETYLGLUCOSAMINE 1-CARBOXYVINYLTRANSFERASE"/>
    <property type="match status" value="1"/>
</dbReference>
<dbReference type="Pfam" id="PF00275">
    <property type="entry name" value="EPSP_synthase"/>
    <property type="match status" value="1"/>
</dbReference>
<dbReference type="SUPFAM" id="SSF55205">
    <property type="entry name" value="EPT/RTPC-like"/>
    <property type="match status" value="1"/>
</dbReference>